<gene>
    <name evidence="1" type="primary">cysI</name>
    <name type="ordered locus">MXAN_2334</name>
</gene>
<proteinExistence type="inferred from homology"/>
<sequence length="562" mass="62086">MSHQPKPLSEVEHIKTQSRLLRGSLAESLEDPVTGGLATPDTNLIKFHGSYQQDDRDVREERRQQKLEPDYSFMLRTRLPGGVCTPAQWLVMDALAREHANHTLRITTRQAFQLHGVIKDDLRPTIARINEAMMDTLAACGDVNRNVLCNPNPVDSRVHETVYQWAVRISEHLLPKTRAYYEVWLGKEKVAGGEDEPIYGATYLPRKFKAAVAVPPLNDVDVFAQDLGFIAIIEGDALVGFNVSVGGGMGATHGDAATYPRLADVVGFIPPEQTLAVAEEVVKIHRDFGDRTNRKHARLKYVLEERGVPWFTAELEKRLGFPLQPARPFAFEHNGDRFGWTEGHDGRWHLTLHLDSGRVADRPGAPHLTGLREIARIHTGDFRLTANQNLVIAGVTPEARDAIGALVTAHALDSFRSASPVRRNALACVALPTCGLAMAEAERYLPTFVGRLEDRLRAHGLQDANLLLRITGCPNGCARPYLAEVGLVGKAPGRYNLHLGGDARGQRLSHLYRENIDEDAILAALEPLFEGYARERQPGEGFGDFVVRAGHVPSPAVQPRPS</sequence>
<feature type="chain" id="PRO_0000388501" description="Sulfite reductase [NADPH] hemoprotein beta-component">
    <location>
        <begin position="1"/>
        <end position="562"/>
    </location>
</feature>
<feature type="binding site" evidence="1">
    <location>
        <position position="428"/>
    </location>
    <ligand>
        <name>[4Fe-4S] cluster</name>
        <dbReference type="ChEBI" id="CHEBI:49883"/>
    </ligand>
</feature>
<feature type="binding site" evidence="1">
    <location>
        <position position="434"/>
    </location>
    <ligand>
        <name>[4Fe-4S] cluster</name>
        <dbReference type="ChEBI" id="CHEBI:49883"/>
    </ligand>
</feature>
<feature type="binding site" evidence="1">
    <location>
        <position position="473"/>
    </location>
    <ligand>
        <name>[4Fe-4S] cluster</name>
        <dbReference type="ChEBI" id="CHEBI:49883"/>
    </ligand>
</feature>
<feature type="binding site" evidence="1">
    <location>
        <position position="477"/>
    </location>
    <ligand>
        <name>[4Fe-4S] cluster</name>
        <dbReference type="ChEBI" id="CHEBI:49883"/>
    </ligand>
</feature>
<feature type="binding site" description="axial binding residue" evidence="1">
    <location>
        <position position="477"/>
    </location>
    <ligand>
        <name>siroheme</name>
        <dbReference type="ChEBI" id="CHEBI:60052"/>
    </ligand>
    <ligandPart>
        <name>Fe</name>
        <dbReference type="ChEBI" id="CHEBI:18248"/>
    </ligandPart>
</feature>
<reference key="1">
    <citation type="journal article" date="2006" name="Proc. Natl. Acad. Sci. U.S.A.">
        <title>Evolution of sensory complexity recorded in a myxobacterial genome.</title>
        <authorList>
            <person name="Goldman B.S."/>
            <person name="Nierman W.C."/>
            <person name="Kaiser D."/>
            <person name="Slater S.C."/>
            <person name="Durkin A.S."/>
            <person name="Eisen J.A."/>
            <person name="Ronning C.M."/>
            <person name="Barbazuk W.B."/>
            <person name="Blanchard M."/>
            <person name="Field C."/>
            <person name="Halling C."/>
            <person name="Hinkle G."/>
            <person name="Iartchuk O."/>
            <person name="Kim H.S."/>
            <person name="Mackenzie C."/>
            <person name="Madupu R."/>
            <person name="Miller N."/>
            <person name="Shvartsbeyn A."/>
            <person name="Sullivan S.A."/>
            <person name="Vaudin M."/>
            <person name="Wiegand R."/>
            <person name="Kaplan H.B."/>
        </authorList>
    </citation>
    <scope>NUCLEOTIDE SEQUENCE [LARGE SCALE GENOMIC DNA]</scope>
    <source>
        <strain>DK1622</strain>
    </source>
</reference>
<organism>
    <name type="scientific">Myxococcus xanthus (strain DK1622)</name>
    <dbReference type="NCBI Taxonomy" id="246197"/>
    <lineage>
        <taxon>Bacteria</taxon>
        <taxon>Pseudomonadati</taxon>
        <taxon>Myxococcota</taxon>
        <taxon>Myxococcia</taxon>
        <taxon>Myxococcales</taxon>
        <taxon>Cystobacterineae</taxon>
        <taxon>Myxococcaceae</taxon>
        <taxon>Myxococcus</taxon>
    </lineage>
</organism>
<name>CYSI_MYXXD</name>
<accession>Q1D9W9</accession>
<comment type="function">
    <text evidence="1">Component of the sulfite reductase complex that catalyzes the 6-electron reduction of sulfite to sulfide. This is one of several activities required for the biosynthesis of L-cysteine from sulfate.</text>
</comment>
<comment type="catalytic activity">
    <reaction evidence="1">
        <text>hydrogen sulfide + 3 NADP(+) + 3 H2O = sulfite + 3 NADPH + 4 H(+)</text>
        <dbReference type="Rhea" id="RHEA:13801"/>
        <dbReference type="ChEBI" id="CHEBI:15377"/>
        <dbReference type="ChEBI" id="CHEBI:15378"/>
        <dbReference type="ChEBI" id="CHEBI:17359"/>
        <dbReference type="ChEBI" id="CHEBI:29919"/>
        <dbReference type="ChEBI" id="CHEBI:57783"/>
        <dbReference type="ChEBI" id="CHEBI:58349"/>
        <dbReference type="EC" id="1.8.1.2"/>
    </reaction>
</comment>
<comment type="cofactor">
    <cofactor evidence="1">
        <name>siroheme</name>
        <dbReference type="ChEBI" id="CHEBI:60052"/>
    </cofactor>
    <text evidence="1">Binds 1 siroheme per subunit.</text>
</comment>
<comment type="cofactor">
    <cofactor evidence="1">
        <name>[4Fe-4S] cluster</name>
        <dbReference type="ChEBI" id="CHEBI:49883"/>
    </cofactor>
    <text evidence="1">Binds 1 [4Fe-4S] cluster per subunit.</text>
</comment>
<comment type="pathway">
    <text evidence="1">Sulfur metabolism; hydrogen sulfide biosynthesis; hydrogen sulfide from sulfite (NADPH route): step 1/1.</text>
</comment>
<comment type="subunit">
    <text evidence="1">Alpha(8)-beta(8). The alpha component is a flavoprotein, the beta component is a hemoprotein.</text>
</comment>
<comment type="similarity">
    <text evidence="1">Belongs to the nitrite and sulfite reductase 4Fe-4S domain family.</text>
</comment>
<dbReference type="EC" id="1.8.1.2" evidence="1"/>
<dbReference type="EMBL" id="CP000113">
    <property type="protein sequence ID" value="ABF92185.1"/>
    <property type="molecule type" value="Genomic_DNA"/>
</dbReference>
<dbReference type="RefSeq" id="WP_011552409.1">
    <property type="nucleotide sequence ID" value="NC_008095.1"/>
</dbReference>
<dbReference type="SMR" id="Q1D9W9"/>
<dbReference type="STRING" id="246197.MXAN_2334"/>
<dbReference type="EnsemblBacteria" id="ABF92185">
    <property type="protein sequence ID" value="ABF92185"/>
    <property type="gene ID" value="MXAN_2334"/>
</dbReference>
<dbReference type="GeneID" id="41359720"/>
<dbReference type="KEGG" id="mxa:MXAN_2334"/>
<dbReference type="eggNOG" id="COG0155">
    <property type="taxonomic scope" value="Bacteria"/>
</dbReference>
<dbReference type="HOGENOM" id="CLU_001975_3_2_7"/>
<dbReference type="OrthoDB" id="9803707at2"/>
<dbReference type="UniPathway" id="UPA00140">
    <property type="reaction ID" value="UER00207"/>
</dbReference>
<dbReference type="Proteomes" id="UP000002402">
    <property type="component" value="Chromosome"/>
</dbReference>
<dbReference type="GO" id="GO:0009337">
    <property type="term" value="C:sulfite reductase complex (NADPH)"/>
    <property type="evidence" value="ECO:0007669"/>
    <property type="project" value="InterPro"/>
</dbReference>
<dbReference type="GO" id="GO:0051539">
    <property type="term" value="F:4 iron, 4 sulfur cluster binding"/>
    <property type="evidence" value="ECO:0007669"/>
    <property type="project" value="UniProtKB-KW"/>
</dbReference>
<dbReference type="GO" id="GO:0020037">
    <property type="term" value="F:heme binding"/>
    <property type="evidence" value="ECO:0007669"/>
    <property type="project" value="InterPro"/>
</dbReference>
<dbReference type="GO" id="GO:0046872">
    <property type="term" value="F:metal ion binding"/>
    <property type="evidence" value="ECO:0007669"/>
    <property type="project" value="UniProtKB-KW"/>
</dbReference>
<dbReference type="GO" id="GO:0050661">
    <property type="term" value="F:NADP binding"/>
    <property type="evidence" value="ECO:0007669"/>
    <property type="project" value="InterPro"/>
</dbReference>
<dbReference type="GO" id="GO:0050311">
    <property type="term" value="F:sulfite reductase (ferredoxin) activity"/>
    <property type="evidence" value="ECO:0007669"/>
    <property type="project" value="TreeGrafter"/>
</dbReference>
<dbReference type="GO" id="GO:0004783">
    <property type="term" value="F:sulfite reductase (NADPH) activity"/>
    <property type="evidence" value="ECO:0007669"/>
    <property type="project" value="UniProtKB-UniRule"/>
</dbReference>
<dbReference type="GO" id="GO:0019344">
    <property type="term" value="P:cysteine biosynthetic process"/>
    <property type="evidence" value="ECO:0007669"/>
    <property type="project" value="UniProtKB-KW"/>
</dbReference>
<dbReference type="GO" id="GO:0070814">
    <property type="term" value="P:hydrogen sulfide biosynthetic process"/>
    <property type="evidence" value="ECO:0007669"/>
    <property type="project" value="UniProtKB-UniRule"/>
</dbReference>
<dbReference type="GO" id="GO:0000103">
    <property type="term" value="P:sulfate assimilation"/>
    <property type="evidence" value="ECO:0007669"/>
    <property type="project" value="UniProtKB-UniRule"/>
</dbReference>
<dbReference type="FunFam" id="3.30.413.10:FF:000003">
    <property type="entry name" value="Sulfite reductase [NADPH] hemoprotein beta-component"/>
    <property type="match status" value="1"/>
</dbReference>
<dbReference type="FunFam" id="3.30.413.10:FF:000004">
    <property type="entry name" value="Sulfite reductase [NADPH] hemoprotein beta-component"/>
    <property type="match status" value="1"/>
</dbReference>
<dbReference type="Gene3D" id="3.30.413.10">
    <property type="entry name" value="Sulfite Reductase Hemoprotein, domain 1"/>
    <property type="match status" value="2"/>
</dbReference>
<dbReference type="HAMAP" id="MF_01540">
    <property type="entry name" value="CysI"/>
    <property type="match status" value="1"/>
</dbReference>
<dbReference type="InterPro" id="IPR011786">
    <property type="entry name" value="CysI"/>
</dbReference>
<dbReference type="InterPro" id="IPR005117">
    <property type="entry name" value="NiRdtase/SiRdtase_haem-b_fer"/>
</dbReference>
<dbReference type="InterPro" id="IPR036136">
    <property type="entry name" value="Nit/Sulf_reduc_fer-like_dom_sf"/>
</dbReference>
<dbReference type="InterPro" id="IPR006067">
    <property type="entry name" value="NO2/SO3_Rdtase_4Fe4S_dom"/>
</dbReference>
<dbReference type="InterPro" id="IPR045169">
    <property type="entry name" value="NO2/SO3_Rdtase_4Fe4S_prot"/>
</dbReference>
<dbReference type="InterPro" id="IPR045854">
    <property type="entry name" value="NO2/SO3_Rdtase_4Fe4S_sf"/>
</dbReference>
<dbReference type="InterPro" id="IPR006066">
    <property type="entry name" value="NO2/SO3_Rdtase_FeS/sirohaem_BS"/>
</dbReference>
<dbReference type="NCBIfam" id="TIGR02041">
    <property type="entry name" value="CysI"/>
    <property type="match status" value="1"/>
</dbReference>
<dbReference type="NCBIfam" id="NF010029">
    <property type="entry name" value="PRK13504.1"/>
    <property type="match status" value="1"/>
</dbReference>
<dbReference type="PANTHER" id="PTHR11493:SF47">
    <property type="entry name" value="SULFITE REDUCTASE [NADPH] SUBUNIT BETA"/>
    <property type="match status" value="1"/>
</dbReference>
<dbReference type="PANTHER" id="PTHR11493">
    <property type="entry name" value="SULFITE REDUCTASE [NADPH] SUBUNIT BETA-RELATED"/>
    <property type="match status" value="1"/>
</dbReference>
<dbReference type="Pfam" id="PF01077">
    <property type="entry name" value="NIR_SIR"/>
    <property type="match status" value="1"/>
</dbReference>
<dbReference type="Pfam" id="PF03460">
    <property type="entry name" value="NIR_SIR_ferr"/>
    <property type="match status" value="2"/>
</dbReference>
<dbReference type="PRINTS" id="PR00397">
    <property type="entry name" value="SIROHAEM"/>
</dbReference>
<dbReference type="SUPFAM" id="SSF56014">
    <property type="entry name" value="Nitrite and sulphite reductase 4Fe-4S domain-like"/>
    <property type="match status" value="2"/>
</dbReference>
<dbReference type="SUPFAM" id="SSF55124">
    <property type="entry name" value="Nitrite/Sulfite reductase N-terminal domain-like"/>
    <property type="match status" value="2"/>
</dbReference>
<dbReference type="PROSITE" id="PS00365">
    <property type="entry name" value="NIR_SIR"/>
    <property type="match status" value="1"/>
</dbReference>
<keyword id="KW-0004">4Fe-4S</keyword>
<keyword id="KW-0028">Amino-acid biosynthesis</keyword>
<keyword id="KW-0198">Cysteine biosynthesis</keyword>
<keyword id="KW-0349">Heme</keyword>
<keyword id="KW-0408">Iron</keyword>
<keyword id="KW-0411">Iron-sulfur</keyword>
<keyword id="KW-0479">Metal-binding</keyword>
<keyword id="KW-0521">NADP</keyword>
<keyword id="KW-0560">Oxidoreductase</keyword>
<keyword id="KW-1185">Reference proteome</keyword>
<protein>
    <recommendedName>
        <fullName evidence="1">Sulfite reductase [NADPH] hemoprotein beta-component</fullName>
        <shortName evidence="1">SiR-HP</shortName>
        <shortName evidence="1">SiRHP</shortName>
        <ecNumber evidence="1">1.8.1.2</ecNumber>
    </recommendedName>
</protein>
<evidence type="ECO:0000255" key="1">
    <source>
        <dbReference type="HAMAP-Rule" id="MF_01540"/>
    </source>
</evidence>